<name>RUBR1_CHLTE</name>
<proteinExistence type="inferred from homology"/>
<keyword id="KW-0249">Electron transport</keyword>
<keyword id="KW-0408">Iron</keyword>
<keyword id="KW-0479">Metal-binding</keyword>
<keyword id="KW-1185">Reference proteome</keyword>
<keyword id="KW-0813">Transport</keyword>
<sequence>MNVKESEPAQADLQASWMCAECGYIYDPAEGNLETNIRPGMPFDKLPDDWSCPVCNHPKNQFTKFISQL</sequence>
<accession>P58992</accession>
<evidence type="ECO:0000250" key="1"/>
<evidence type="ECO:0000255" key="2">
    <source>
        <dbReference type="PROSITE-ProRule" id="PRU00241"/>
    </source>
</evidence>
<evidence type="ECO:0000305" key="3"/>
<organism>
    <name type="scientific">Chlorobaculum tepidum (strain ATCC 49652 / DSM 12025 / NBRC 103806 / TLS)</name>
    <name type="common">Chlorobium tepidum</name>
    <dbReference type="NCBI Taxonomy" id="194439"/>
    <lineage>
        <taxon>Bacteria</taxon>
        <taxon>Pseudomonadati</taxon>
        <taxon>Chlorobiota</taxon>
        <taxon>Chlorobiia</taxon>
        <taxon>Chlorobiales</taxon>
        <taxon>Chlorobiaceae</taxon>
        <taxon>Chlorobaculum</taxon>
    </lineage>
</organism>
<comment type="function">
    <text evidence="1">Serves as an electron acceptor for pyruvate ferredoxin oxidoreductase (PFOR).</text>
</comment>
<comment type="cofactor">
    <cofactor evidence="1">
        <name>Fe(3+)</name>
        <dbReference type="ChEBI" id="CHEBI:29034"/>
    </cofactor>
    <text evidence="1">Binds 1 Fe(3+) ion per subunit.</text>
</comment>
<comment type="subunit">
    <text evidence="1">Monomer.</text>
</comment>
<comment type="similarity">
    <text evidence="3">Belongs to the rubredoxin family.</text>
</comment>
<reference key="1">
    <citation type="journal article" date="2002" name="Proc. Natl. Acad. Sci. U.S.A.">
        <title>The complete genome sequence of Chlorobium tepidum TLS, a photosynthetic, anaerobic, green-sulfur bacterium.</title>
        <authorList>
            <person name="Eisen J.A."/>
            <person name="Nelson K.E."/>
            <person name="Paulsen I.T."/>
            <person name="Heidelberg J.F."/>
            <person name="Wu M."/>
            <person name="Dodson R.J."/>
            <person name="DeBoy R.T."/>
            <person name="Gwinn M.L."/>
            <person name="Nelson W.C."/>
            <person name="Haft D.H."/>
            <person name="Hickey E.K."/>
            <person name="Peterson J.D."/>
            <person name="Durkin A.S."/>
            <person name="Kolonay J.F."/>
            <person name="Yang F."/>
            <person name="Holt I.E."/>
            <person name="Umayam L.A."/>
            <person name="Mason T.M."/>
            <person name="Brenner M."/>
            <person name="Shea T.P."/>
            <person name="Parksey D.S."/>
            <person name="Nierman W.C."/>
            <person name="Feldblyum T.V."/>
            <person name="Hansen C.L."/>
            <person name="Craven M.B."/>
            <person name="Radune D."/>
            <person name="Vamathevan J.J."/>
            <person name="Khouri H.M."/>
            <person name="White O."/>
            <person name="Gruber T.M."/>
            <person name="Ketchum K.A."/>
            <person name="Venter J.C."/>
            <person name="Tettelin H."/>
            <person name="Bryant D.A."/>
            <person name="Fraser C.M."/>
        </authorList>
    </citation>
    <scope>NUCLEOTIDE SEQUENCE [LARGE SCALE GENOMIC DNA]</scope>
    <source>
        <strain>ATCC 49652 / DSM 12025 / NBRC 103806 / TLS</strain>
    </source>
</reference>
<feature type="chain" id="PRO_0000135026" description="Rubredoxin-1">
    <location>
        <begin position="1"/>
        <end position="69"/>
    </location>
</feature>
<feature type="domain" description="Rubredoxin-like" evidence="2">
    <location>
        <begin position="14"/>
        <end position="69"/>
    </location>
</feature>
<feature type="binding site" evidence="2">
    <location>
        <position position="19"/>
    </location>
    <ligand>
        <name>Fe cation</name>
        <dbReference type="ChEBI" id="CHEBI:24875"/>
    </ligand>
</feature>
<feature type="binding site" evidence="2">
    <location>
        <position position="22"/>
    </location>
    <ligand>
        <name>Fe cation</name>
        <dbReference type="ChEBI" id="CHEBI:24875"/>
    </ligand>
</feature>
<feature type="binding site" evidence="2">
    <location>
        <position position="52"/>
    </location>
    <ligand>
        <name>Fe cation</name>
        <dbReference type="ChEBI" id="CHEBI:24875"/>
    </ligand>
</feature>
<feature type="binding site" evidence="2">
    <location>
        <position position="55"/>
    </location>
    <ligand>
        <name>Fe cation</name>
        <dbReference type="ChEBI" id="CHEBI:24875"/>
    </ligand>
</feature>
<protein>
    <recommendedName>
        <fullName>Rubredoxin-1</fullName>
        <shortName>Rd 1</shortName>
    </recommendedName>
</protein>
<dbReference type="EMBL" id="AE006470">
    <property type="protein sequence ID" value="AAM72333.1"/>
    <property type="molecule type" value="Genomic_DNA"/>
</dbReference>
<dbReference type="RefSeq" id="NP_661991.1">
    <property type="nucleotide sequence ID" value="NC_002932.3"/>
</dbReference>
<dbReference type="RefSeq" id="WP_010932778.1">
    <property type="nucleotide sequence ID" value="NC_002932.3"/>
</dbReference>
<dbReference type="SMR" id="P58992"/>
<dbReference type="STRING" id="194439.CT1100"/>
<dbReference type="EnsemblBacteria" id="AAM72333">
    <property type="protein sequence ID" value="AAM72333"/>
    <property type="gene ID" value="CT1100"/>
</dbReference>
<dbReference type="KEGG" id="cte:CT1100"/>
<dbReference type="PATRIC" id="fig|194439.7.peg.1001"/>
<dbReference type="eggNOG" id="COG1773">
    <property type="taxonomic scope" value="Bacteria"/>
</dbReference>
<dbReference type="HOGENOM" id="CLU_128747_3_3_10"/>
<dbReference type="OrthoDB" id="9794638at2"/>
<dbReference type="Proteomes" id="UP000001007">
    <property type="component" value="Chromosome"/>
</dbReference>
<dbReference type="GO" id="GO:0009055">
    <property type="term" value="F:electron transfer activity"/>
    <property type="evidence" value="ECO:0007669"/>
    <property type="project" value="TreeGrafter"/>
</dbReference>
<dbReference type="GO" id="GO:0005506">
    <property type="term" value="F:iron ion binding"/>
    <property type="evidence" value="ECO:0007669"/>
    <property type="project" value="InterPro"/>
</dbReference>
<dbReference type="GO" id="GO:0043448">
    <property type="term" value="P:alkane catabolic process"/>
    <property type="evidence" value="ECO:0007669"/>
    <property type="project" value="TreeGrafter"/>
</dbReference>
<dbReference type="CDD" id="cd00730">
    <property type="entry name" value="rubredoxin"/>
    <property type="match status" value="1"/>
</dbReference>
<dbReference type="FunFam" id="2.20.28.10:FF:000001">
    <property type="entry name" value="Rubredoxin"/>
    <property type="match status" value="1"/>
</dbReference>
<dbReference type="Gene3D" id="2.20.28.10">
    <property type="match status" value="1"/>
</dbReference>
<dbReference type="InterPro" id="IPR024934">
    <property type="entry name" value="Rubredoxin-like_dom"/>
</dbReference>
<dbReference type="InterPro" id="IPR024935">
    <property type="entry name" value="Rubredoxin_dom"/>
</dbReference>
<dbReference type="InterPro" id="IPR050526">
    <property type="entry name" value="Rubredoxin_ET"/>
</dbReference>
<dbReference type="PANTHER" id="PTHR47627">
    <property type="entry name" value="RUBREDOXIN"/>
    <property type="match status" value="1"/>
</dbReference>
<dbReference type="PANTHER" id="PTHR47627:SF1">
    <property type="entry name" value="RUBREDOXIN-1-RELATED"/>
    <property type="match status" value="1"/>
</dbReference>
<dbReference type="Pfam" id="PF00301">
    <property type="entry name" value="Rubredoxin"/>
    <property type="match status" value="1"/>
</dbReference>
<dbReference type="PRINTS" id="PR00163">
    <property type="entry name" value="RUBREDOXIN"/>
</dbReference>
<dbReference type="SUPFAM" id="SSF57802">
    <property type="entry name" value="Rubredoxin-like"/>
    <property type="match status" value="1"/>
</dbReference>
<dbReference type="PROSITE" id="PS50903">
    <property type="entry name" value="RUBREDOXIN_LIKE"/>
    <property type="match status" value="1"/>
</dbReference>
<gene>
    <name type="primary">rub1</name>
    <name type="synonym">rbr-1</name>
    <name type="ordered locus">CT1100</name>
</gene>